<sequence>MNIKIASRNSALALWQTHHIRDLLIAQGHSVEIITMKTKGDVILDTPLAKIGGKGLFTKELENSMLEGSADIAVHSLKDVPTTFPDGLKLACVCSREDVRDAMLSMKYKNLDELPQGAKVGTTSLRRKMQILAHRADLDIISLRGNVNSRIAKLKNGEFDAIILAMAGINRLNLSKEVKFTSAIDTIPAMGQGALGIEAIDKKEILDAIEFLNDEKSVVETTIERDFVHTLNGGCQAPIGINAKLKGDKIEVEAILGLVDGSEILRDSKTYPKLAYKIAGKNFADEFIARGAKELLKRAEEMV</sequence>
<evidence type="ECO:0000255" key="1">
    <source>
        <dbReference type="HAMAP-Rule" id="MF_00260"/>
    </source>
</evidence>
<comment type="function">
    <text evidence="1">Tetrapolymerization of the monopyrrole PBG into the hydroxymethylbilane pre-uroporphyrinogen in several discrete steps.</text>
</comment>
<comment type="catalytic activity">
    <reaction evidence="1">
        <text>4 porphobilinogen + H2O = hydroxymethylbilane + 4 NH4(+)</text>
        <dbReference type="Rhea" id="RHEA:13185"/>
        <dbReference type="ChEBI" id="CHEBI:15377"/>
        <dbReference type="ChEBI" id="CHEBI:28938"/>
        <dbReference type="ChEBI" id="CHEBI:57845"/>
        <dbReference type="ChEBI" id="CHEBI:58126"/>
        <dbReference type="EC" id="2.5.1.61"/>
    </reaction>
</comment>
<comment type="cofactor">
    <cofactor evidence="1">
        <name>dipyrromethane</name>
        <dbReference type="ChEBI" id="CHEBI:60342"/>
    </cofactor>
    <text evidence="1">Binds 1 dipyrromethane group covalently.</text>
</comment>
<comment type="pathway">
    <text evidence="1">Porphyrin-containing compound metabolism; protoporphyrin-IX biosynthesis; coproporphyrinogen-III from 5-aminolevulinate: step 2/4.</text>
</comment>
<comment type="subunit">
    <text evidence="1">Monomer.</text>
</comment>
<comment type="miscellaneous">
    <text evidence="1">The porphobilinogen subunits are added to the dipyrromethane group.</text>
</comment>
<comment type="similarity">
    <text evidence="1">Belongs to the HMBS family.</text>
</comment>
<accession>A0RNT3</accession>
<name>HEM3_CAMFF</name>
<reference key="1">
    <citation type="submission" date="2006-11" db="EMBL/GenBank/DDBJ databases">
        <title>Sequence of Campylobacter fetus subsp. fetus 82-40.</title>
        <authorList>
            <person name="Fouts D.E."/>
            <person name="Nelson K.E."/>
        </authorList>
    </citation>
    <scope>NUCLEOTIDE SEQUENCE [LARGE SCALE GENOMIC DNA]</scope>
    <source>
        <strain>82-40</strain>
    </source>
</reference>
<feature type="chain" id="PRO_0000304222" description="Porphobilinogen deaminase">
    <location>
        <begin position="1"/>
        <end position="303"/>
    </location>
</feature>
<feature type="modified residue" description="S-(dipyrrolylmethanemethyl)cysteine" evidence="1">
    <location>
        <position position="235"/>
    </location>
</feature>
<keyword id="KW-0627">Porphyrin biosynthesis</keyword>
<keyword id="KW-0808">Transferase</keyword>
<organism>
    <name type="scientific">Campylobacter fetus subsp. fetus (strain 82-40)</name>
    <dbReference type="NCBI Taxonomy" id="360106"/>
    <lineage>
        <taxon>Bacteria</taxon>
        <taxon>Pseudomonadati</taxon>
        <taxon>Campylobacterota</taxon>
        <taxon>Epsilonproteobacteria</taxon>
        <taxon>Campylobacterales</taxon>
        <taxon>Campylobacteraceae</taxon>
        <taxon>Campylobacter</taxon>
    </lineage>
</organism>
<gene>
    <name evidence="1" type="primary">hemC</name>
    <name type="ordered locus">CFF8240_0691</name>
</gene>
<proteinExistence type="inferred from homology"/>
<protein>
    <recommendedName>
        <fullName evidence="1">Porphobilinogen deaminase</fullName>
        <shortName evidence="1">PBG</shortName>
        <ecNumber evidence="1">2.5.1.61</ecNumber>
    </recommendedName>
    <alternativeName>
        <fullName evidence="1">Hydroxymethylbilane synthase</fullName>
        <shortName evidence="1">HMBS</shortName>
    </alternativeName>
    <alternativeName>
        <fullName evidence="1">Pre-uroporphyrinogen synthase</fullName>
    </alternativeName>
</protein>
<dbReference type="EC" id="2.5.1.61" evidence="1"/>
<dbReference type="EMBL" id="CP000487">
    <property type="protein sequence ID" value="ABK82150.1"/>
    <property type="molecule type" value="Genomic_DNA"/>
</dbReference>
<dbReference type="RefSeq" id="WP_011731915.1">
    <property type="nucleotide sequence ID" value="NC_008599.1"/>
</dbReference>
<dbReference type="SMR" id="A0RNT3"/>
<dbReference type="GeneID" id="61064532"/>
<dbReference type="KEGG" id="cff:CFF8240_0691"/>
<dbReference type="eggNOG" id="COG0181">
    <property type="taxonomic scope" value="Bacteria"/>
</dbReference>
<dbReference type="HOGENOM" id="CLU_019704_1_0_7"/>
<dbReference type="UniPathway" id="UPA00251">
    <property type="reaction ID" value="UER00319"/>
</dbReference>
<dbReference type="Proteomes" id="UP000000760">
    <property type="component" value="Chromosome"/>
</dbReference>
<dbReference type="GO" id="GO:0005737">
    <property type="term" value="C:cytoplasm"/>
    <property type="evidence" value="ECO:0007669"/>
    <property type="project" value="TreeGrafter"/>
</dbReference>
<dbReference type="GO" id="GO:0004418">
    <property type="term" value="F:hydroxymethylbilane synthase activity"/>
    <property type="evidence" value="ECO:0007669"/>
    <property type="project" value="UniProtKB-UniRule"/>
</dbReference>
<dbReference type="GO" id="GO:0006782">
    <property type="term" value="P:protoporphyrinogen IX biosynthetic process"/>
    <property type="evidence" value="ECO:0007669"/>
    <property type="project" value="UniProtKB-UniRule"/>
</dbReference>
<dbReference type="CDD" id="cd13646">
    <property type="entry name" value="PBP2_EcHMBS_like"/>
    <property type="match status" value="1"/>
</dbReference>
<dbReference type="FunFam" id="3.40.190.10:FF:000004">
    <property type="entry name" value="Porphobilinogen deaminase"/>
    <property type="match status" value="1"/>
</dbReference>
<dbReference type="FunFam" id="3.40.190.10:FF:000005">
    <property type="entry name" value="Porphobilinogen deaminase"/>
    <property type="match status" value="1"/>
</dbReference>
<dbReference type="Gene3D" id="3.40.190.10">
    <property type="entry name" value="Periplasmic binding protein-like II"/>
    <property type="match status" value="2"/>
</dbReference>
<dbReference type="Gene3D" id="3.30.160.40">
    <property type="entry name" value="Porphobilinogen deaminase, C-terminal domain"/>
    <property type="match status" value="1"/>
</dbReference>
<dbReference type="HAMAP" id="MF_00260">
    <property type="entry name" value="Porphobil_deam"/>
    <property type="match status" value="1"/>
</dbReference>
<dbReference type="InterPro" id="IPR000860">
    <property type="entry name" value="HemC"/>
</dbReference>
<dbReference type="InterPro" id="IPR022419">
    <property type="entry name" value="Porphobilin_deaminase_cofac_BS"/>
</dbReference>
<dbReference type="InterPro" id="IPR022417">
    <property type="entry name" value="Porphobilin_deaminase_N"/>
</dbReference>
<dbReference type="InterPro" id="IPR022418">
    <property type="entry name" value="Porphobilinogen_deaminase_C"/>
</dbReference>
<dbReference type="InterPro" id="IPR036803">
    <property type="entry name" value="Porphobilinogen_deaminase_C_sf"/>
</dbReference>
<dbReference type="NCBIfam" id="TIGR00212">
    <property type="entry name" value="hemC"/>
    <property type="match status" value="1"/>
</dbReference>
<dbReference type="PANTHER" id="PTHR11557">
    <property type="entry name" value="PORPHOBILINOGEN DEAMINASE"/>
    <property type="match status" value="1"/>
</dbReference>
<dbReference type="PANTHER" id="PTHR11557:SF0">
    <property type="entry name" value="PORPHOBILINOGEN DEAMINASE"/>
    <property type="match status" value="1"/>
</dbReference>
<dbReference type="Pfam" id="PF01379">
    <property type="entry name" value="Porphobil_deam"/>
    <property type="match status" value="1"/>
</dbReference>
<dbReference type="Pfam" id="PF03900">
    <property type="entry name" value="Porphobil_deamC"/>
    <property type="match status" value="1"/>
</dbReference>
<dbReference type="PIRSF" id="PIRSF001438">
    <property type="entry name" value="4pyrrol_synth_OHMeBilane_synth"/>
    <property type="match status" value="1"/>
</dbReference>
<dbReference type="PRINTS" id="PR00151">
    <property type="entry name" value="PORPHBDMNASE"/>
</dbReference>
<dbReference type="SUPFAM" id="SSF53850">
    <property type="entry name" value="Periplasmic binding protein-like II"/>
    <property type="match status" value="1"/>
</dbReference>
<dbReference type="SUPFAM" id="SSF54782">
    <property type="entry name" value="Porphobilinogen deaminase (hydroxymethylbilane synthase), C-terminal domain"/>
    <property type="match status" value="1"/>
</dbReference>
<dbReference type="PROSITE" id="PS00533">
    <property type="entry name" value="PORPHOBILINOGEN_DEAM"/>
    <property type="match status" value="1"/>
</dbReference>